<evidence type="ECO:0000256" key="1">
    <source>
        <dbReference type="SAM" id="MobiDB-lite"/>
    </source>
</evidence>
<evidence type="ECO:0000269" key="2">
    <source>
    </source>
</evidence>
<evidence type="ECO:0000269" key="3">
    <source>
    </source>
</evidence>
<evidence type="ECO:0000269" key="4">
    <source>
    </source>
</evidence>
<evidence type="ECO:0000269" key="5">
    <source>
    </source>
</evidence>
<evidence type="ECO:0000269" key="6">
    <source>
    </source>
</evidence>
<evidence type="ECO:0000305" key="7"/>
<evidence type="ECO:0007744" key="8">
    <source>
    </source>
</evidence>
<protein>
    <recommendedName>
        <fullName>Testis-specific Y-encoded-like protein 1</fullName>
        <shortName>TSPY-like protein 1</shortName>
    </recommendedName>
</protein>
<name>TSYL1_HUMAN</name>
<proteinExistence type="evidence at protein level"/>
<gene>
    <name type="primary">TSPYL1</name>
    <name type="synonym">TSPYL</name>
</gene>
<sequence>MSGLDGVKRTTPLQTHSIIISDQVPSDQDAHQYLRLRDQSEATQVMAEPGEGGSETVALPPPPPSEEGGVPQDAAGRGGTPQIRVVGGRGHVAIKAGQEEGQPPAEGLAAASVVMAADRSLKKGVQGGEKALEICGAQRSASELTAGAEAEAEEVKTGKCATVSAAVAERESAEVVKEGLAEKEVMEEQMEVEEQPPEGEEIEVAEEDRLEEEAREEEGPWPLHEALRMDPLEAIQLELDTVNAQADRAFQQLEHKFGRMRRHYLERRNYIIQNIPGFWMTAFRNHPQLSAMIRGQDAEMLRYITNLEVKELRHPRTGCKFKFFFRRNPYFRNKLIVKEYEVRSSGRVVSLSTPIIWRRGHEPQSFIRRNQDLICSFFTWFSDHSLPESDKIAEIIKEDLWPNPLQYYLLREGVRRARRRPLREPVEIPRPFGFQSG</sequence>
<dbReference type="EMBL" id="AL136629">
    <property type="protein sequence ID" value="CAB66564.1"/>
    <property type="molecule type" value="mRNA"/>
</dbReference>
<dbReference type="EMBL" id="AL050331">
    <property type="status" value="NOT_ANNOTATED_CDS"/>
    <property type="molecule type" value="Genomic_DNA"/>
</dbReference>
<dbReference type="EMBL" id="CH471051">
    <property type="protein sequence ID" value="EAW48232.1"/>
    <property type="molecule type" value="Genomic_DNA"/>
</dbReference>
<dbReference type="EMBL" id="BC048969">
    <property type="protein sequence ID" value="AAH48969.1"/>
    <property type="molecule type" value="mRNA"/>
</dbReference>
<dbReference type="EMBL" id="AF042181">
    <property type="protein sequence ID" value="AAC62384.1"/>
    <property type="molecule type" value="mRNA"/>
</dbReference>
<dbReference type="CCDS" id="CCDS34518.1"/>
<dbReference type="RefSeq" id="NP_003300.1">
    <property type="nucleotide sequence ID" value="NM_003309.4"/>
</dbReference>
<dbReference type="SMR" id="Q9H0U9"/>
<dbReference type="BioGRID" id="113110">
    <property type="interactions" value="170"/>
</dbReference>
<dbReference type="FunCoup" id="Q9H0U9">
    <property type="interactions" value="1572"/>
</dbReference>
<dbReference type="IntAct" id="Q9H0U9">
    <property type="interactions" value="72"/>
</dbReference>
<dbReference type="MINT" id="Q9H0U9"/>
<dbReference type="STRING" id="9606.ENSP00000357597"/>
<dbReference type="iPTMnet" id="Q9H0U9"/>
<dbReference type="PhosphoSitePlus" id="Q9H0U9"/>
<dbReference type="BioMuta" id="TSPYL1"/>
<dbReference type="DMDM" id="209572711"/>
<dbReference type="jPOST" id="Q9H0U9"/>
<dbReference type="MassIVE" id="Q9H0U9"/>
<dbReference type="PaxDb" id="9606-ENSP00000357597"/>
<dbReference type="PeptideAtlas" id="Q9H0U9"/>
<dbReference type="ProteomicsDB" id="80327"/>
<dbReference type="Pumba" id="Q9H0U9"/>
<dbReference type="Antibodypedia" id="32489">
    <property type="antibodies" value="147 antibodies from 26 providers"/>
</dbReference>
<dbReference type="DNASU" id="7259"/>
<dbReference type="Ensembl" id="ENST00000368608.4">
    <property type="protein sequence ID" value="ENSP00000357597.4"/>
    <property type="gene ID" value="ENSG00000189241.8"/>
</dbReference>
<dbReference type="Ensembl" id="ENST00000652202.1">
    <property type="protein sequence ID" value="ENSP00000498597.1"/>
    <property type="gene ID" value="ENSG00000189241.8"/>
</dbReference>
<dbReference type="GeneID" id="7259"/>
<dbReference type="KEGG" id="hsa:7259"/>
<dbReference type="MANE-Select" id="ENST00000368608.4">
    <property type="protein sequence ID" value="ENSP00000357597.4"/>
    <property type="RefSeq nucleotide sequence ID" value="NM_003309.4"/>
    <property type="RefSeq protein sequence ID" value="NP_003300.1"/>
</dbReference>
<dbReference type="UCSC" id="uc003pwp.5">
    <property type="organism name" value="human"/>
</dbReference>
<dbReference type="AGR" id="HGNC:12382"/>
<dbReference type="CTD" id="7259"/>
<dbReference type="DisGeNET" id="7259"/>
<dbReference type="GeneCards" id="TSPYL1"/>
<dbReference type="HGNC" id="HGNC:12382">
    <property type="gene designation" value="TSPYL1"/>
</dbReference>
<dbReference type="HPA" id="ENSG00000189241">
    <property type="expression patterns" value="Low tissue specificity"/>
</dbReference>
<dbReference type="MalaCards" id="TSPYL1"/>
<dbReference type="MIM" id="604714">
    <property type="type" value="gene"/>
</dbReference>
<dbReference type="MIM" id="608800">
    <property type="type" value="phenotype"/>
</dbReference>
<dbReference type="neXtProt" id="NX_Q9H0U9"/>
<dbReference type="OpenTargets" id="ENSG00000189241"/>
<dbReference type="Orphanet" id="168593">
    <property type="disease" value="Sudden infant death-dysgenesis of the testes syndrome"/>
</dbReference>
<dbReference type="PharmGKB" id="PA37050"/>
<dbReference type="VEuPathDB" id="HostDB:ENSG00000189241"/>
<dbReference type="eggNOG" id="KOG1508">
    <property type="taxonomic scope" value="Eukaryota"/>
</dbReference>
<dbReference type="GeneTree" id="ENSGT00940000162821"/>
<dbReference type="HOGENOM" id="CLU_051687_2_0_1"/>
<dbReference type="InParanoid" id="Q9H0U9"/>
<dbReference type="OMA" id="RRGYEPQ"/>
<dbReference type="OrthoDB" id="19419at2759"/>
<dbReference type="PAN-GO" id="Q9H0U9">
    <property type="GO annotations" value="4 GO annotations based on evolutionary models"/>
</dbReference>
<dbReference type="PhylomeDB" id="Q9H0U9"/>
<dbReference type="TreeFam" id="TF313386"/>
<dbReference type="PathwayCommons" id="Q9H0U9"/>
<dbReference type="SignaLink" id="Q9H0U9"/>
<dbReference type="BioGRID-ORCS" id="7259">
    <property type="hits" value="26 hits in 1159 CRISPR screens"/>
</dbReference>
<dbReference type="CD-CODE" id="91857CE7">
    <property type="entry name" value="Nucleolus"/>
</dbReference>
<dbReference type="ChiTaRS" id="TSPYL1">
    <property type="organism name" value="human"/>
</dbReference>
<dbReference type="GeneWiki" id="TSPYL1"/>
<dbReference type="GenomeRNAi" id="7259"/>
<dbReference type="Pharos" id="Q9H0U9">
    <property type="development level" value="Tbio"/>
</dbReference>
<dbReference type="PRO" id="PR:Q9H0U9"/>
<dbReference type="Proteomes" id="UP000005640">
    <property type="component" value="Chromosome 6"/>
</dbReference>
<dbReference type="RNAct" id="Q9H0U9">
    <property type="molecule type" value="protein"/>
</dbReference>
<dbReference type="Bgee" id="ENSG00000189241">
    <property type="expression patterns" value="Expressed in germinal epithelium of ovary and 210 other cell types or tissues"/>
</dbReference>
<dbReference type="GO" id="GO:0000785">
    <property type="term" value="C:chromatin"/>
    <property type="evidence" value="ECO:0000318"/>
    <property type="project" value="GO_Central"/>
</dbReference>
<dbReference type="GO" id="GO:0005730">
    <property type="term" value="C:nucleolus"/>
    <property type="evidence" value="ECO:0000314"/>
    <property type="project" value="HPA"/>
</dbReference>
<dbReference type="GO" id="GO:0005654">
    <property type="term" value="C:nucleoplasm"/>
    <property type="evidence" value="ECO:0000314"/>
    <property type="project" value="HPA"/>
</dbReference>
<dbReference type="GO" id="GO:0005634">
    <property type="term" value="C:nucleus"/>
    <property type="evidence" value="ECO:0000318"/>
    <property type="project" value="GO_Central"/>
</dbReference>
<dbReference type="GO" id="GO:0003682">
    <property type="term" value="F:chromatin binding"/>
    <property type="evidence" value="ECO:0000318"/>
    <property type="project" value="GO_Central"/>
</dbReference>
<dbReference type="GO" id="GO:0019899">
    <property type="term" value="F:enzyme binding"/>
    <property type="evidence" value="ECO:0000353"/>
    <property type="project" value="UniProtKB"/>
</dbReference>
<dbReference type="GO" id="GO:0042393">
    <property type="term" value="F:histone binding"/>
    <property type="evidence" value="ECO:0000318"/>
    <property type="project" value="GO_Central"/>
</dbReference>
<dbReference type="GO" id="GO:0006334">
    <property type="term" value="P:nucleosome assembly"/>
    <property type="evidence" value="ECO:0007669"/>
    <property type="project" value="InterPro"/>
</dbReference>
<dbReference type="FunFam" id="3.30.1120.90:FF:000002">
    <property type="entry name" value="Testis-specific Y-encoded-like protein 2"/>
    <property type="match status" value="1"/>
</dbReference>
<dbReference type="Gene3D" id="1.20.5.1500">
    <property type="match status" value="1"/>
</dbReference>
<dbReference type="Gene3D" id="3.30.1120.90">
    <property type="entry name" value="Nucleosome assembly protein"/>
    <property type="match status" value="1"/>
</dbReference>
<dbReference type="InterPro" id="IPR037231">
    <property type="entry name" value="NAP-like_sf"/>
</dbReference>
<dbReference type="InterPro" id="IPR002164">
    <property type="entry name" value="NAP_family"/>
</dbReference>
<dbReference type="PANTHER" id="PTHR11875">
    <property type="entry name" value="TESTIS-SPECIFIC Y-ENCODED PROTEIN"/>
    <property type="match status" value="1"/>
</dbReference>
<dbReference type="Pfam" id="PF00956">
    <property type="entry name" value="NAP"/>
    <property type="match status" value="1"/>
</dbReference>
<dbReference type="SUPFAM" id="SSF143113">
    <property type="entry name" value="NAP-like"/>
    <property type="match status" value="1"/>
</dbReference>
<comment type="subcellular location">
    <subcellularLocation>
        <location evidence="3">Nucleus</location>
        <location evidence="3">Nucleolus</location>
    </subcellularLocation>
</comment>
<comment type="tissue specificity">
    <text evidence="6">Expressed in testis, ovary, liver, spleen, brain, kidney, prostate, lung, liver, and heart.</text>
</comment>
<comment type="PTM">
    <text evidence="5">Ubiquitinated by the CRL2(APPBP2) complex, which recognizes the Arg-Xaa-Xaa-Gly sequence at the C-terminus, leading to its degradation.</text>
</comment>
<comment type="disease" evidence="4">
    <disease id="DI-02346">
        <name>Sudden infant death with dysgenesis of the testes syndrome</name>
        <acronym>SIDDT</acronym>
        <description>Autosomal recessive disorder. Affected infants appear normal at birth, develop signs of visceroautonomic dysfunction early in life, and die before 12 months of age of abrupt cardiorespiratory arrest. Features included bradycardia, hypothermia, severe gastroesophageal reflux, laryngospasm, bronchospasm, and abnormal cardiorespiratory patterns during sleep. Genotypic males with SIDDT had fetal testicular dysgenesis and ambiguous genitalia, with findings such as intraabdominal testes, dysplastic testes, deficient fetal testosterone production, fusion and rugation of the gonadal sac, and partial development of the penile shaft. Female sexual development was normal. Affected infants had an unusual staccato cry, similar to the cry of a goat.</description>
        <dbReference type="MIM" id="608800"/>
    </disease>
    <text>The disease is caused by variants affecting the gene represented in this entry.</text>
</comment>
<comment type="similarity">
    <text evidence="7">Belongs to the nucleosome assembly protein (NAP) family.</text>
</comment>
<keyword id="KW-1017">Isopeptide bond</keyword>
<keyword id="KW-0539">Nucleus</keyword>
<keyword id="KW-1267">Proteomics identification</keyword>
<keyword id="KW-1185">Reference proteome</keyword>
<keyword id="KW-0832">Ubl conjugation</keyword>
<feature type="chain" id="PRO_0000185670" description="Testis-specific Y-encoded-like protein 1">
    <location>
        <begin position="1"/>
        <end position="437"/>
    </location>
</feature>
<feature type="region of interest" description="Disordered" evidence="1">
    <location>
        <begin position="1"/>
        <end position="81"/>
    </location>
</feature>
<feature type="compositionally biased region" description="Polar residues" evidence="1">
    <location>
        <begin position="11"/>
        <end position="26"/>
    </location>
</feature>
<feature type="compositionally biased region" description="Basic and acidic residues" evidence="1">
    <location>
        <begin position="28"/>
        <end position="40"/>
    </location>
</feature>
<feature type="cross-link" description="Glycyl lysine isopeptide (Lys-Gly) (interchain with G-Cter in SUMO2)" evidence="8">
    <location>
        <position position="156"/>
    </location>
</feature>
<feature type="sequence variant" id="VAR_016229" description="In dbSNP:rs3828743." evidence="2">
    <original>P</original>
    <variation>S</variation>
    <location>
        <position position="62"/>
    </location>
</feature>
<feature type="sequence variant" id="VAR_016230" description="In dbSNP:rs3749895." evidence="2">
    <original>A</original>
    <variation>P</variation>
    <location>
        <position position="74"/>
    </location>
</feature>
<feature type="sequence variant" id="VAR_046722" description="In dbSNP:rs3749894.">
    <original>A</original>
    <variation>T</variation>
    <location>
        <position position="181"/>
    </location>
</feature>
<feature type="sequence conflict" description="In Ref. 1; CAB66564 and 4; AAH48969." evidence="7" ref="1 4">
    <original>E</original>
    <variation>EV</variation>
    <location>
        <position position="174"/>
    </location>
</feature>
<feature type="sequence conflict" description="In Ref. 5; AAC62384." evidence="7" ref="5">
    <original>R</original>
    <variation>C</variation>
    <location>
        <position position="420"/>
    </location>
</feature>
<reference key="1">
    <citation type="journal article" date="2001" name="Genome Res.">
        <title>Towards a catalog of human genes and proteins: sequencing and analysis of 500 novel complete protein coding human cDNAs.</title>
        <authorList>
            <person name="Wiemann S."/>
            <person name="Weil B."/>
            <person name="Wellenreuther R."/>
            <person name="Gassenhuber J."/>
            <person name="Glassl S."/>
            <person name="Ansorge W."/>
            <person name="Boecher M."/>
            <person name="Bloecker H."/>
            <person name="Bauersachs S."/>
            <person name="Blum H."/>
            <person name="Lauber J."/>
            <person name="Duesterhoeft A."/>
            <person name="Beyer A."/>
            <person name="Koehrer K."/>
            <person name="Strack N."/>
            <person name="Mewes H.-W."/>
            <person name="Ottenwaelder B."/>
            <person name="Obermaier B."/>
            <person name="Tampe J."/>
            <person name="Heubner D."/>
            <person name="Wambutt R."/>
            <person name="Korn B."/>
            <person name="Klein M."/>
            <person name="Poustka A."/>
        </authorList>
    </citation>
    <scope>NUCLEOTIDE SEQUENCE [LARGE SCALE MRNA]</scope>
    <scope>VARIANTS SER-62 AND PRO-74</scope>
    <source>
        <tissue>Fetal brain</tissue>
    </source>
</reference>
<reference key="2">
    <citation type="journal article" date="2003" name="Nature">
        <title>The DNA sequence and analysis of human chromosome 6.</title>
        <authorList>
            <person name="Mungall A.J."/>
            <person name="Palmer S.A."/>
            <person name="Sims S.K."/>
            <person name="Edwards C.A."/>
            <person name="Ashurst J.L."/>
            <person name="Wilming L."/>
            <person name="Jones M.C."/>
            <person name="Horton R."/>
            <person name="Hunt S.E."/>
            <person name="Scott C.E."/>
            <person name="Gilbert J.G.R."/>
            <person name="Clamp M.E."/>
            <person name="Bethel G."/>
            <person name="Milne S."/>
            <person name="Ainscough R."/>
            <person name="Almeida J.P."/>
            <person name="Ambrose K.D."/>
            <person name="Andrews T.D."/>
            <person name="Ashwell R.I.S."/>
            <person name="Babbage A.K."/>
            <person name="Bagguley C.L."/>
            <person name="Bailey J."/>
            <person name="Banerjee R."/>
            <person name="Barker D.J."/>
            <person name="Barlow K.F."/>
            <person name="Bates K."/>
            <person name="Beare D.M."/>
            <person name="Beasley H."/>
            <person name="Beasley O."/>
            <person name="Bird C.P."/>
            <person name="Blakey S.E."/>
            <person name="Bray-Allen S."/>
            <person name="Brook J."/>
            <person name="Brown A.J."/>
            <person name="Brown J.Y."/>
            <person name="Burford D.C."/>
            <person name="Burrill W."/>
            <person name="Burton J."/>
            <person name="Carder C."/>
            <person name="Carter N.P."/>
            <person name="Chapman J.C."/>
            <person name="Clark S.Y."/>
            <person name="Clark G."/>
            <person name="Clee C.M."/>
            <person name="Clegg S."/>
            <person name="Cobley V."/>
            <person name="Collier R.E."/>
            <person name="Collins J.E."/>
            <person name="Colman L.K."/>
            <person name="Corby N.R."/>
            <person name="Coville G.J."/>
            <person name="Culley K.M."/>
            <person name="Dhami P."/>
            <person name="Davies J."/>
            <person name="Dunn M."/>
            <person name="Earthrowl M.E."/>
            <person name="Ellington A.E."/>
            <person name="Evans K.A."/>
            <person name="Faulkner L."/>
            <person name="Francis M.D."/>
            <person name="Frankish A."/>
            <person name="Frankland J."/>
            <person name="French L."/>
            <person name="Garner P."/>
            <person name="Garnett J."/>
            <person name="Ghori M.J."/>
            <person name="Gilby L.M."/>
            <person name="Gillson C.J."/>
            <person name="Glithero R.J."/>
            <person name="Grafham D.V."/>
            <person name="Grant M."/>
            <person name="Gribble S."/>
            <person name="Griffiths C."/>
            <person name="Griffiths M.N.D."/>
            <person name="Hall R."/>
            <person name="Halls K.S."/>
            <person name="Hammond S."/>
            <person name="Harley J.L."/>
            <person name="Hart E.A."/>
            <person name="Heath P.D."/>
            <person name="Heathcott R."/>
            <person name="Holmes S.J."/>
            <person name="Howden P.J."/>
            <person name="Howe K.L."/>
            <person name="Howell G.R."/>
            <person name="Huckle E."/>
            <person name="Humphray S.J."/>
            <person name="Humphries M.D."/>
            <person name="Hunt A.R."/>
            <person name="Johnson C.M."/>
            <person name="Joy A.A."/>
            <person name="Kay M."/>
            <person name="Keenan S.J."/>
            <person name="Kimberley A.M."/>
            <person name="King A."/>
            <person name="Laird G.K."/>
            <person name="Langford C."/>
            <person name="Lawlor S."/>
            <person name="Leongamornlert D.A."/>
            <person name="Leversha M."/>
            <person name="Lloyd C.R."/>
            <person name="Lloyd D.M."/>
            <person name="Loveland J.E."/>
            <person name="Lovell J."/>
            <person name="Martin S."/>
            <person name="Mashreghi-Mohammadi M."/>
            <person name="Maslen G.L."/>
            <person name="Matthews L."/>
            <person name="McCann O.T."/>
            <person name="McLaren S.J."/>
            <person name="McLay K."/>
            <person name="McMurray A."/>
            <person name="Moore M.J.F."/>
            <person name="Mullikin J.C."/>
            <person name="Niblett D."/>
            <person name="Nickerson T."/>
            <person name="Novik K.L."/>
            <person name="Oliver K."/>
            <person name="Overton-Larty E.K."/>
            <person name="Parker A."/>
            <person name="Patel R."/>
            <person name="Pearce A.V."/>
            <person name="Peck A.I."/>
            <person name="Phillimore B.J.C.T."/>
            <person name="Phillips S."/>
            <person name="Plumb R.W."/>
            <person name="Porter K.M."/>
            <person name="Ramsey Y."/>
            <person name="Ranby S.A."/>
            <person name="Rice C.M."/>
            <person name="Ross M.T."/>
            <person name="Searle S.M."/>
            <person name="Sehra H.K."/>
            <person name="Sheridan E."/>
            <person name="Skuce C.D."/>
            <person name="Smith S."/>
            <person name="Smith M."/>
            <person name="Spraggon L."/>
            <person name="Squares S.L."/>
            <person name="Steward C.A."/>
            <person name="Sycamore N."/>
            <person name="Tamlyn-Hall G."/>
            <person name="Tester J."/>
            <person name="Theaker A.J."/>
            <person name="Thomas D.W."/>
            <person name="Thorpe A."/>
            <person name="Tracey A."/>
            <person name="Tromans A."/>
            <person name="Tubby B."/>
            <person name="Wall M."/>
            <person name="Wallis J.M."/>
            <person name="West A.P."/>
            <person name="White S.S."/>
            <person name="Whitehead S.L."/>
            <person name="Whittaker H."/>
            <person name="Wild A."/>
            <person name="Willey D.J."/>
            <person name="Wilmer T.E."/>
            <person name="Wood J.M."/>
            <person name="Wray P.W."/>
            <person name="Wyatt J.C."/>
            <person name="Young L."/>
            <person name="Younger R.M."/>
            <person name="Bentley D.R."/>
            <person name="Coulson A."/>
            <person name="Durbin R.M."/>
            <person name="Hubbard T."/>
            <person name="Sulston J.E."/>
            <person name="Dunham I."/>
            <person name="Rogers J."/>
            <person name="Beck S."/>
        </authorList>
    </citation>
    <scope>NUCLEOTIDE SEQUENCE [LARGE SCALE GENOMIC DNA]</scope>
</reference>
<reference key="3">
    <citation type="submission" date="2005-09" db="EMBL/GenBank/DDBJ databases">
        <authorList>
            <person name="Mural R.J."/>
            <person name="Istrail S."/>
            <person name="Sutton G.G."/>
            <person name="Florea L."/>
            <person name="Halpern A.L."/>
            <person name="Mobarry C.M."/>
            <person name="Lippert R."/>
            <person name="Walenz B."/>
            <person name="Shatkay H."/>
            <person name="Dew I."/>
            <person name="Miller J.R."/>
            <person name="Flanigan M.J."/>
            <person name="Edwards N.J."/>
            <person name="Bolanos R."/>
            <person name="Fasulo D."/>
            <person name="Halldorsson B.V."/>
            <person name="Hannenhalli S."/>
            <person name="Turner R."/>
            <person name="Yooseph S."/>
            <person name="Lu F."/>
            <person name="Nusskern D.R."/>
            <person name="Shue B.C."/>
            <person name="Zheng X.H."/>
            <person name="Zhong F."/>
            <person name="Delcher A.L."/>
            <person name="Huson D.H."/>
            <person name="Kravitz S.A."/>
            <person name="Mouchard L."/>
            <person name="Reinert K."/>
            <person name="Remington K.A."/>
            <person name="Clark A.G."/>
            <person name="Waterman M.S."/>
            <person name="Eichler E.E."/>
            <person name="Adams M.D."/>
            <person name="Hunkapiller M.W."/>
            <person name="Myers E.W."/>
            <person name="Venter J.C."/>
        </authorList>
    </citation>
    <scope>NUCLEOTIDE SEQUENCE [LARGE SCALE GENOMIC DNA]</scope>
</reference>
<reference key="4">
    <citation type="journal article" date="2004" name="Genome Res.">
        <title>The status, quality, and expansion of the NIH full-length cDNA project: the Mammalian Gene Collection (MGC).</title>
        <authorList>
            <consortium name="The MGC Project Team"/>
        </authorList>
    </citation>
    <scope>NUCLEOTIDE SEQUENCE [LARGE SCALE MRNA]</scope>
    <source>
        <tissue>Testis</tissue>
    </source>
</reference>
<reference key="5">
    <citation type="journal article" date="1998" name="Cytogenet. Cell Genet.">
        <title>Murine and human TSPYL genes: novel members of the TSPY-SET-NAP1L1 family.</title>
        <authorList>
            <person name="Vogel T."/>
            <person name="Dittrich O."/>
            <person name="Mehraein Y."/>
            <person name="Dechend F."/>
            <person name="Schnieders F."/>
            <person name="Schmidtke J."/>
        </authorList>
    </citation>
    <scope>NUCLEOTIDE SEQUENCE [MRNA] OF 365-437</scope>
    <scope>TISSUE SPECIFICITY</scope>
</reference>
<reference key="6">
    <citation type="journal article" date="2002" name="Mol. Biol. Cell">
        <title>Functional proteomic analysis of human nucleolus.</title>
        <authorList>
            <person name="Scherl A."/>
            <person name="Coute Y."/>
            <person name="Deon C."/>
            <person name="Calle A."/>
            <person name="Kindbeiter K."/>
            <person name="Sanchez J.-C."/>
            <person name="Greco A."/>
            <person name="Hochstrasser D.F."/>
            <person name="Diaz J.-J."/>
        </authorList>
    </citation>
    <scope>SUBCELLULAR LOCATION [LARGE SCALE ANALYSIS]</scope>
    <source>
        <tissue>Cervix carcinoma</tissue>
    </source>
</reference>
<reference key="7">
    <citation type="journal article" date="2004" name="Proc. Natl. Acad. Sci. U.S.A.">
        <title>Mapping of sudden infant death with dysgenesis of the testes syndrome (SIDDT) by a SNP genome scan and identification of TSPYL loss of function.</title>
        <authorList>
            <person name="Puffenberger E.G."/>
            <person name="Hu-Lince D."/>
            <person name="Parod J.M."/>
            <person name="Craig D.W."/>
            <person name="Dobrin S.E."/>
            <person name="Conway A.R."/>
            <person name="Donarum E.A."/>
            <person name="Strauss K.A."/>
            <person name="Dunckley T."/>
            <person name="Cardenas J.F."/>
            <person name="Melmed K.R."/>
            <person name="Wright C.A."/>
            <person name="Liang W."/>
            <person name="Stafford P."/>
            <person name="Flynn C.R."/>
            <person name="Morton D.H."/>
            <person name="Stephan D.A."/>
        </authorList>
    </citation>
    <scope>INVOLVEMENT IN SIDDT</scope>
</reference>
<reference key="8">
    <citation type="journal article" date="2011" name="BMC Syst. Biol.">
        <title>Initial characterization of the human central proteome.</title>
        <authorList>
            <person name="Burkard T.R."/>
            <person name="Planyavsky M."/>
            <person name="Kaupe I."/>
            <person name="Breitwieser F.P."/>
            <person name="Buerckstuemmer T."/>
            <person name="Bennett K.L."/>
            <person name="Superti-Furga G."/>
            <person name="Colinge J."/>
        </authorList>
    </citation>
    <scope>IDENTIFICATION BY MASS SPECTROMETRY [LARGE SCALE ANALYSIS]</scope>
</reference>
<reference key="9">
    <citation type="journal article" date="2017" name="Nat. Struct. Mol. Biol.">
        <title>Site-specific mapping of the human SUMO proteome reveals co-modification with phosphorylation.</title>
        <authorList>
            <person name="Hendriks I.A."/>
            <person name="Lyon D."/>
            <person name="Young C."/>
            <person name="Jensen L.J."/>
            <person name="Vertegaal A.C."/>
            <person name="Nielsen M.L."/>
        </authorList>
    </citation>
    <scope>SUMOYLATION [LARGE SCALE ANALYSIS] AT LYS-156</scope>
    <scope>IDENTIFICATION BY MASS SPECTROMETRY [LARGE SCALE ANALYSIS]</scope>
</reference>
<reference key="10">
    <citation type="journal article" date="2018" name="Cell">
        <title>The eukaryotic proteome is shaped by E3 ubiquitin ligases targeting C-terminal degrons.</title>
        <authorList>
            <person name="Koren I."/>
            <person name="Timms R.T."/>
            <person name="Kula T."/>
            <person name="Xu Q."/>
            <person name="Li M.Z."/>
            <person name="Elledge S.J."/>
        </authorList>
    </citation>
    <scope>UBIQUITINATION</scope>
</reference>
<organism>
    <name type="scientific">Homo sapiens</name>
    <name type="common">Human</name>
    <dbReference type="NCBI Taxonomy" id="9606"/>
    <lineage>
        <taxon>Eukaryota</taxon>
        <taxon>Metazoa</taxon>
        <taxon>Chordata</taxon>
        <taxon>Craniata</taxon>
        <taxon>Vertebrata</taxon>
        <taxon>Euteleostomi</taxon>
        <taxon>Mammalia</taxon>
        <taxon>Eutheria</taxon>
        <taxon>Euarchontoglires</taxon>
        <taxon>Primates</taxon>
        <taxon>Haplorrhini</taxon>
        <taxon>Catarrhini</taxon>
        <taxon>Hominidae</taxon>
        <taxon>Homo</taxon>
    </lineage>
</organism>
<accession>Q9H0U9</accession>
<accession>O75885</accession>
<accession>Q5TFE6</accession>